<gene>
    <name type="ordered locus">Mmcs_5056</name>
</gene>
<keyword id="KW-0456">Lyase</keyword>
<keyword id="KW-0479">Metal-binding</keyword>
<name>RRAAH_MYCSS</name>
<protein>
    <recommendedName>
        <fullName>Putative 4-hydroxy-4-methyl-2-oxoglutarate aldolase</fullName>
        <shortName>HMG aldolase</shortName>
        <ecNumber>4.1.3.17</ecNumber>
    </recommendedName>
    <alternativeName>
        <fullName>Oxaloacetate decarboxylase</fullName>
        <shortName>OAA decarboxylase</shortName>
        <ecNumber>4.1.1.112</ecNumber>
    </alternativeName>
    <alternativeName>
        <fullName>Regulator of ribonuclease activity homolog</fullName>
    </alternativeName>
    <alternativeName>
        <fullName>RraA-like protein</fullName>
    </alternativeName>
</protein>
<reference key="1">
    <citation type="submission" date="2006-06" db="EMBL/GenBank/DDBJ databases">
        <title>Complete sequence of chromosome of Mycobacterium sp. MCS.</title>
        <authorList>
            <consortium name="US DOE Joint Genome Institute"/>
            <person name="Copeland A."/>
            <person name="Lucas S."/>
            <person name="Lapidus A."/>
            <person name="Barry K."/>
            <person name="Detter J.C."/>
            <person name="Glavina del Rio T."/>
            <person name="Hammon N."/>
            <person name="Israni S."/>
            <person name="Dalin E."/>
            <person name="Tice H."/>
            <person name="Pitluck S."/>
            <person name="Martinez M."/>
            <person name="Schmutz J."/>
            <person name="Larimer F."/>
            <person name="Land M."/>
            <person name="Hauser L."/>
            <person name="Kyrpides N."/>
            <person name="Kim E."/>
            <person name="Miller C.D."/>
            <person name="Hughes J.E."/>
            <person name="Anderson A.J."/>
            <person name="Sims R.C."/>
            <person name="Richardson P."/>
        </authorList>
    </citation>
    <scope>NUCLEOTIDE SEQUENCE [LARGE SCALE GENOMIC DNA]</scope>
    <source>
        <strain>MCS</strain>
    </source>
</reference>
<evidence type="ECO:0000250" key="1"/>
<evidence type="ECO:0000305" key="2"/>
<comment type="function">
    <text evidence="1">Catalyzes the aldol cleavage of 4-hydroxy-4-methyl-2-oxoglutarate (HMG) into 2 molecules of pyruvate. Also contains a secondary oxaloacetate (OAA) decarboxylase activity due to the common pyruvate enolate transition state formed following C-C bond cleavage in the retro-aldol and decarboxylation reactions (By similarity).</text>
</comment>
<comment type="catalytic activity">
    <reaction>
        <text>4-hydroxy-4-methyl-2-oxoglutarate = 2 pyruvate</text>
        <dbReference type="Rhea" id="RHEA:22748"/>
        <dbReference type="ChEBI" id="CHEBI:15361"/>
        <dbReference type="ChEBI" id="CHEBI:58276"/>
        <dbReference type="EC" id="4.1.3.17"/>
    </reaction>
</comment>
<comment type="catalytic activity">
    <reaction>
        <text>oxaloacetate + H(+) = pyruvate + CO2</text>
        <dbReference type="Rhea" id="RHEA:15641"/>
        <dbReference type="ChEBI" id="CHEBI:15361"/>
        <dbReference type="ChEBI" id="CHEBI:15378"/>
        <dbReference type="ChEBI" id="CHEBI:16452"/>
        <dbReference type="ChEBI" id="CHEBI:16526"/>
        <dbReference type="EC" id="4.1.1.112"/>
    </reaction>
</comment>
<comment type="cofactor">
    <cofactor evidence="1">
        <name>a divalent metal cation</name>
        <dbReference type="ChEBI" id="CHEBI:60240"/>
    </cofactor>
    <text evidence="1">Divalent metal cation.</text>
</comment>
<comment type="subunit">
    <text evidence="1">Homotrimer.</text>
</comment>
<comment type="similarity">
    <text evidence="2">Belongs to the class II aldolase/RraA-like family.</text>
</comment>
<proteinExistence type="inferred from homology"/>
<organism>
    <name type="scientific">Mycobacterium sp. (strain MCS)</name>
    <dbReference type="NCBI Taxonomy" id="164756"/>
    <lineage>
        <taxon>Bacteria</taxon>
        <taxon>Bacillati</taxon>
        <taxon>Actinomycetota</taxon>
        <taxon>Actinomycetes</taxon>
        <taxon>Mycobacteriales</taxon>
        <taxon>Mycobacteriaceae</taxon>
        <taxon>Mycobacterium</taxon>
    </lineage>
</organism>
<dbReference type="EC" id="4.1.3.17"/>
<dbReference type="EC" id="4.1.1.112"/>
<dbReference type="EMBL" id="CP000384">
    <property type="protein sequence ID" value="ABG11160.1"/>
    <property type="molecule type" value="Genomic_DNA"/>
</dbReference>
<dbReference type="SMR" id="Q1B1S4"/>
<dbReference type="KEGG" id="mmc:Mmcs_5056"/>
<dbReference type="HOGENOM" id="CLU_072626_4_0_11"/>
<dbReference type="BioCyc" id="MSP164756:G1G6O-5169-MONOMER"/>
<dbReference type="GO" id="GO:0047443">
    <property type="term" value="F:4-hydroxy-4-methyl-2-oxoglutarate aldolase activity"/>
    <property type="evidence" value="ECO:0007669"/>
    <property type="project" value="UniProtKB-EC"/>
</dbReference>
<dbReference type="GO" id="GO:0046872">
    <property type="term" value="F:metal ion binding"/>
    <property type="evidence" value="ECO:0007669"/>
    <property type="project" value="UniProtKB-KW"/>
</dbReference>
<dbReference type="GO" id="GO:0008948">
    <property type="term" value="F:oxaloacetate decarboxylase activity"/>
    <property type="evidence" value="ECO:0007669"/>
    <property type="project" value="UniProtKB-EC"/>
</dbReference>
<dbReference type="GO" id="GO:0008428">
    <property type="term" value="F:ribonuclease inhibitor activity"/>
    <property type="evidence" value="ECO:0007669"/>
    <property type="project" value="InterPro"/>
</dbReference>
<dbReference type="GO" id="GO:0051252">
    <property type="term" value="P:regulation of RNA metabolic process"/>
    <property type="evidence" value="ECO:0007669"/>
    <property type="project" value="InterPro"/>
</dbReference>
<dbReference type="CDD" id="cd16841">
    <property type="entry name" value="RraA_family"/>
    <property type="match status" value="1"/>
</dbReference>
<dbReference type="Gene3D" id="3.50.30.40">
    <property type="entry name" value="Ribonuclease E inhibitor RraA/RraA-like"/>
    <property type="match status" value="1"/>
</dbReference>
<dbReference type="InterPro" id="IPR010203">
    <property type="entry name" value="RraA"/>
</dbReference>
<dbReference type="InterPro" id="IPR005493">
    <property type="entry name" value="RraA/RraA-like"/>
</dbReference>
<dbReference type="InterPro" id="IPR036704">
    <property type="entry name" value="RraA/RraA-like_sf"/>
</dbReference>
<dbReference type="NCBIfam" id="TIGR01935">
    <property type="entry name" value="NOT-MenG"/>
    <property type="match status" value="1"/>
</dbReference>
<dbReference type="NCBIfam" id="NF006875">
    <property type="entry name" value="PRK09372.1"/>
    <property type="match status" value="1"/>
</dbReference>
<dbReference type="PANTHER" id="PTHR33254">
    <property type="entry name" value="4-HYDROXY-4-METHYL-2-OXOGLUTARATE ALDOLASE 3-RELATED"/>
    <property type="match status" value="1"/>
</dbReference>
<dbReference type="PANTHER" id="PTHR33254:SF4">
    <property type="entry name" value="4-HYDROXY-4-METHYL-2-OXOGLUTARATE ALDOLASE 3-RELATED"/>
    <property type="match status" value="1"/>
</dbReference>
<dbReference type="Pfam" id="PF03737">
    <property type="entry name" value="RraA-like"/>
    <property type="match status" value="1"/>
</dbReference>
<dbReference type="SUPFAM" id="SSF89562">
    <property type="entry name" value="RraA-like"/>
    <property type="match status" value="1"/>
</dbReference>
<feature type="chain" id="PRO_1000013852" description="Putative 4-hydroxy-4-methyl-2-oxoglutarate aldolase">
    <location>
        <begin position="1"/>
        <end position="159"/>
    </location>
</feature>
<feature type="binding site" evidence="1">
    <location>
        <begin position="78"/>
        <end position="81"/>
    </location>
    <ligand>
        <name>substrate</name>
    </ligand>
</feature>
<feature type="binding site" evidence="1">
    <location>
        <position position="100"/>
    </location>
    <ligand>
        <name>substrate</name>
    </ligand>
</feature>
<feature type="binding site" evidence="1">
    <location>
        <position position="101"/>
    </location>
    <ligand>
        <name>a divalent metal cation</name>
        <dbReference type="ChEBI" id="CHEBI:60240"/>
    </ligand>
</feature>
<sequence>MTIEPRATADLVDDIGPDVRSCDLQLRQFGRRPEFAGRVTTVRCFQDNALLKSVLSEPGDGGVLVIDGDGSLHTALVGDVIAALGRDNGWSGLIINGAVRDASTLRTLDIGIKALGTNPRKSTKTGAGERDVPVDFGGVTFTPGDVAYSDDDGIVVVTP</sequence>
<accession>Q1B1S4</accession>